<evidence type="ECO:0000255" key="1"/>
<evidence type="ECO:0000305" key="2"/>
<feature type="chain" id="PRO_0000408457" description="Protein U7">
    <location>
        <begin position="1"/>
        <end position="903"/>
    </location>
</feature>
<feature type="transmembrane region" description="Helical" evidence="1">
    <location>
        <begin position="665"/>
        <end position="685"/>
    </location>
</feature>
<proteinExistence type="inferred from homology"/>
<name>VU7_HHV6Z</name>
<dbReference type="EMBL" id="AF157706">
    <property type="protein sequence ID" value="AAD49634.1"/>
    <property type="molecule type" value="Genomic_DNA"/>
</dbReference>
<dbReference type="RefSeq" id="NP_050187.1">
    <property type="nucleotide sequence ID" value="NC_000898.1"/>
</dbReference>
<dbReference type="SMR" id="Q9QJ54"/>
<dbReference type="DNASU" id="1497021"/>
<dbReference type="GeneID" id="1497021"/>
<dbReference type="KEGG" id="vg:1497021"/>
<dbReference type="Proteomes" id="UP000006930">
    <property type="component" value="Segment"/>
</dbReference>
<dbReference type="GO" id="GO:0033644">
    <property type="term" value="C:host cell membrane"/>
    <property type="evidence" value="ECO:0007669"/>
    <property type="project" value="UniProtKB-SubCell"/>
</dbReference>
<dbReference type="GO" id="GO:0016020">
    <property type="term" value="C:membrane"/>
    <property type="evidence" value="ECO:0007669"/>
    <property type="project" value="UniProtKB-KW"/>
</dbReference>
<dbReference type="InterPro" id="IPR010302">
    <property type="entry name" value="UL27-like_protein_herpesevirus"/>
</dbReference>
<dbReference type="Pfam" id="PF05999">
    <property type="entry name" value="Herpes_U5"/>
    <property type="match status" value="1"/>
</dbReference>
<gene>
    <name type="primary">U7</name>
</gene>
<protein>
    <recommendedName>
        <fullName>Protein U7</fullName>
    </recommendedName>
</protein>
<organism>
    <name type="scientific">Human herpesvirus 6B (strain Z29)</name>
    <name type="common">HHV-6 variant B</name>
    <name type="synonym">Human B lymphotropic virus</name>
    <dbReference type="NCBI Taxonomy" id="36351"/>
    <lineage>
        <taxon>Viruses</taxon>
        <taxon>Duplodnaviria</taxon>
        <taxon>Heunggongvirae</taxon>
        <taxon>Peploviricota</taxon>
        <taxon>Herviviricetes</taxon>
        <taxon>Herpesvirales</taxon>
        <taxon>Orthoherpesviridae</taxon>
        <taxon>Betaherpesvirinae</taxon>
        <taxon>Roseolovirus</taxon>
        <taxon>Roseolovirus humanbeta6b</taxon>
        <taxon>Human herpesvirus 6B</taxon>
    </lineage>
</organism>
<comment type="subcellular location">
    <subcellularLocation>
        <location evidence="2">Host membrane</location>
        <topology evidence="2">Single-pass membrane protein</topology>
    </subcellularLocation>
</comment>
<comment type="similarity">
    <text evidence="2">Belongs to the herpesviridae US22 family.</text>
</comment>
<accession>Q9QJ54</accession>
<sequence>MSNFRLILETEGGKRVLCESIVLHFAFMFQTEIVPVCNDEFTLSSCVPTLDFDVDVLSAAYGDGLEISSPGLRCCIAWPPMYALTLGEFYHFHTHRWVSAYDWSSLLDTDEFLSAIGYAHPIYRDPNPDYDPYVMHSSTGKTIAVDTVTEKVYIIAESLVQFFNIGLRQFPPFAEAELDPEQEKMWFGETKCGREEFILLQRNLPAMKDYVAKHCGKRIRVDAFQDFDFSFCSLSDIYYLTGPGILEKITEKDYAIIGTCARSQAEPNCRAAIVMGSNCHIYIYVENRISKVSKSLRTFIRRGFDELLYKEKYSLDWNDDTLFYISDTETENLNRMLNGELPVLRSKPRHMCVRKDRLVKDRSKILFAVRLDEEDSLTVKFITKFLTPVFVGRLPATSRFVVPVSCARLTNGLQGTAAARFGIKGLHPSSDCVVWNRLIDYEYETYKYPSTYVRADQIADMVKNLKFMDNFDEKWQCITKLAFIGLYAGASLFNFASKPTLGYWCRYLCEYASMLLFQFESKLKELTKESTRQLGGYNLCHWGQELKDCLENKSDVFFRYDFFERIESCLIEHFMLLCGCVECRRMFIMYNKRGRKCDFGHCVRIQCFPMIGSIRLPAFLHLGEPYSVSLSSLIAKDLGLSMIEGQIEHSRLPISLQISVTPDKKALLTFLTNIVFIVFVVNTLYRVINAELDIYYDLFTEEVGKLCVTMEEEMKLGRNGCLGDLCYFSSMKQMKEIVRCPGEKSQFILKCWEALRIGFSVPAYKDYDETRFMEMFFLHHLHIKRFHEHNDRDLVSSDNLIPGFFIVNTHEENFLQRLQRVVLPVAEDYLTNTRCINGTMAFFFSGLKYFGSGNHRGVQISPEKDVRAIGYKLGSLDVLRDDYKYYEYAPDCAGELNGHDGDE</sequence>
<keyword id="KW-1043">Host membrane</keyword>
<keyword id="KW-0472">Membrane</keyword>
<keyword id="KW-1185">Reference proteome</keyword>
<keyword id="KW-0812">Transmembrane</keyword>
<keyword id="KW-1133">Transmembrane helix</keyword>
<organismHost>
    <name type="scientific">Homo sapiens</name>
    <name type="common">Human</name>
    <dbReference type="NCBI Taxonomy" id="9606"/>
</organismHost>
<reference key="1">
    <citation type="journal article" date="1999" name="J. Virol.">
        <title>Human herpesvirus 6B genome sequence: coding content and comparison with human herpesvirus 6A.</title>
        <authorList>
            <person name="Dominguez G."/>
            <person name="Dambaugh T.R."/>
            <person name="Stamey F.R."/>
            <person name="Dewhurst S."/>
            <person name="Inoue N."/>
            <person name="Pellett P.E."/>
        </authorList>
    </citation>
    <scope>NUCLEOTIDE SEQUENCE [LARGE SCALE GENOMIC DNA]</scope>
</reference>